<name>IQD29_ARATH</name>
<accession>A0A1P8B0B7</accession>
<accession>O64504</accession>
<accession>Q56Y97</accession>
<reference key="1">
    <citation type="journal article" date="1999" name="Nature">
        <title>Sequence and analysis of chromosome 2 of the plant Arabidopsis thaliana.</title>
        <authorList>
            <person name="Lin X."/>
            <person name="Kaul S."/>
            <person name="Rounsley S.D."/>
            <person name="Shea T.P."/>
            <person name="Benito M.-I."/>
            <person name="Town C.D."/>
            <person name="Fujii C.Y."/>
            <person name="Mason T.M."/>
            <person name="Bowman C.L."/>
            <person name="Barnstead M.E."/>
            <person name="Feldblyum T.V."/>
            <person name="Buell C.R."/>
            <person name="Ketchum K.A."/>
            <person name="Lee J.J."/>
            <person name="Ronning C.M."/>
            <person name="Koo H.L."/>
            <person name="Moffat K.S."/>
            <person name="Cronin L.A."/>
            <person name="Shen M."/>
            <person name="Pai G."/>
            <person name="Van Aken S."/>
            <person name="Umayam L."/>
            <person name="Tallon L.J."/>
            <person name="Gill J.E."/>
            <person name="Adams M.D."/>
            <person name="Carrera A.J."/>
            <person name="Creasy T.H."/>
            <person name="Goodman H.M."/>
            <person name="Somerville C.R."/>
            <person name="Copenhaver G.P."/>
            <person name="Preuss D."/>
            <person name="Nierman W.C."/>
            <person name="White O."/>
            <person name="Eisen J.A."/>
            <person name="Salzberg S.L."/>
            <person name="Fraser C.M."/>
            <person name="Venter J.C."/>
        </authorList>
    </citation>
    <scope>NUCLEOTIDE SEQUENCE [LARGE SCALE GENOMIC DNA]</scope>
    <source>
        <strain>cv. Columbia</strain>
    </source>
</reference>
<reference key="2">
    <citation type="journal article" date="2017" name="Plant J.">
        <title>Araport11: a complete reannotation of the Arabidopsis thaliana reference genome.</title>
        <authorList>
            <person name="Cheng C.Y."/>
            <person name="Krishnakumar V."/>
            <person name="Chan A.P."/>
            <person name="Thibaud-Nissen F."/>
            <person name="Schobel S."/>
            <person name="Town C.D."/>
        </authorList>
    </citation>
    <scope>GENOME REANNOTATION</scope>
    <source>
        <strain>cv. Columbia</strain>
    </source>
</reference>
<reference key="3">
    <citation type="submission" date="2005-03" db="EMBL/GenBank/DDBJ databases">
        <title>Large-scale analysis of RIKEN Arabidopsis full-length (RAFL) cDNAs.</title>
        <authorList>
            <person name="Totoki Y."/>
            <person name="Seki M."/>
            <person name="Ishida J."/>
            <person name="Nakajima M."/>
            <person name="Enju A."/>
            <person name="Kamiya A."/>
            <person name="Narusaka M."/>
            <person name="Shin-i T."/>
            <person name="Nakagawa M."/>
            <person name="Sakamoto N."/>
            <person name="Oishi K."/>
            <person name="Kohara Y."/>
            <person name="Kobayashi M."/>
            <person name="Toyoda A."/>
            <person name="Sakaki Y."/>
            <person name="Sakurai T."/>
            <person name="Iida K."/>
            <person name="Akiyama K."/>
            <person name="Satou M."/>
            <person name="Toyoda T."/>
            <person name="Konagaya A."/>
            <person name="Carninci P."/>
            <person name="Kawai J."/>
            <person name="Hayashizaki Y."/>
            <person name="Shinozaki K."/>
        </authorList>
    </citation>
    <scope>NUCLEOTIDE SEQUENCE [LARGE SCALE MRNA] OF 1-117</scope>
    <source>
        <strain>cv. Columbia</strain>
    </source>
</reference>
<reference key="4">
    <citation type="journal article" date="2005" name="BMC Evol. Biol.">
        <title>Genome-wide comparative analysis of the IQD gene families in Arabidopsis thaliana and Oryza sativa.</title>
        <authorList>
            <person name="Abel S."/>
            <person name="Savchenko T."/>
            <person name="Levy M."/>
        </authorList>
    </citation>
    <scope>INTERACTION WITH CALMODULIN</scope>
    <scope>GENE FAMILY</scope>
    <scope>NOMENCLATURE</scope>
    <source>
        <strain>cv. Columbia</strain>
    </source>
</reference>
<reference key="5">
    <citation type="journal article" date="2009" name="Plant Physiol.">
        <title>Large-scale Arabidopsis phosphoproteome profiling reveals novel chloroplast kinase substrates and phosphorylation networks.</title>
        <authorList>
            <person name="Reiland S."/>
            <person name="Messerli G."/>
            <person name="Baerenfaller K."/>
            <person name="Gerrits B."/>
            <person name="Endler A."/>
            <person name="Grossmann J."/>
            <person name="Gruissem W."/>
            <person name="Baginsky S."/>
        </authorList>
    </citation>
    <scope>IDENTIFICATION BY MASS SPECTROMETRY [LARGE SCALE ANALYSIS]</scope>
</reference>
<reference key="6">
    <citation type="journal article" date="2013" name="Plant Physiol.">
        <title>Purification and characterization of novel microtubule-associated proteins from Arabidopsis cell suspension cultures.</title>
        <authorList>
            <person name="Hamada T."/>
            <person name="Nagasaki-Takeuchi N."/>
            <person name="Kato T."/>
            <person name="Fujiwara M."/>
            <person name="Sonobe S."/>
            <person name="Fukao Y."/>
            <person name="Hashimoto T."/>
        </authorList>
    </citation>
    <scope>SUBCELLULAR LOCATION</scope>
</reference>
<reference key="7">
    <citation type="journal article" date="2017" name="Plant Physiol.">
        <title>The IQD family of calmodulin-binding proteins links calcium signaling to microtubules, membrane subdomains, and the nucleus.</title>
        <authorList>
            <person name="Buerstenbinder K."/>
            <person name="Moeller B."/>
            <person name="Ploetner R."/>
            <person name="Stamm G."/>
            <person name="Hause G."/>
            <person name="Mitra D."/>
            <person name="Abel S."/>
        </authorList>
    </citation>
    <scope>SUBCELLULAR LOCATION</scope>
    <source>
        <strain>cv. Columbia</strain>
    </source>
</reference>
<reference key="8">
    <citation type="journal article" date="2017" name="Plant Signal. Behav.">
        <title>Functions of IQD proteins as hubs in cellular calcium and auxin signaling: A toolbox for shape formation and tissue-specification in plants?</title>
        <authorList>
            <person name="Buerstenbinder K."/>
            <person name="Mitra D."/>
            <person name="Quegwer J."/>
        </authorList>
    </citation>
    <scope>REVIEW</scope>
</reference>
<evidence type="ECO:0000250" key="1">
    <source>
        <dbReference type="UniProtKB" id="Q9SF32"/>
    </source>
</evidence>
<evidence type="ECO:0000255" key="2">
    <source>
        <dbReference type="PROSITE-ProRule" id="PRU00116"/>
    </source>
</evidence>
<evidence type="ECO:0000255" key="3">
    <source>
        <dbReference type="PROSITE-ProRule" id="PRU00768"/>
    </source>
</evidence>
<evidence type="ECO:0000256" key="4">
    <source>
        <dbReference type="SAM" id="MobiDB-lite"/>
    </source>
</evidence>
<evidence type="ECO:0000269" key="5">
    <source>
    </source>
</evidence>
<evidence type="ECO:0000269" key="6">
    <source>
    </source>
</evidence>
<evidence type="ECO:0000303" key="7">
    <source>
    </source>
</evidence>
<evidence type="ECO:0000305" key="8"/>
<evidence type="ECO:0000312" key="9">
    <source>
        <dbReference type="Araport" id="AT2G02790"/>
    </source>
</evidence>
<evidence type="ECO:0000312" key="10">
    <source>
        <dbReference type="EMBL" id="AAC05343.1"/>
    </source>
</evidence>
<keyword id="KW-0112">Calmodulin-binding</keyword>
<keyword id="KW-1003">Cell membrane</keyword>
<keyword id="KW-0963">Cytoplasm</keyword>
<keyword id="KW-0206">Cytoskeleton</keyword>
<keyword id="KW-0472">Membrane</keyword>
<keyword id="KW-0539">Nucleus</keyword>
<keyword id="KW-1185">Reference proteome</keyword>
<keyword id="KW-0677">Repeat</keyword>
<proteinExistence type="evidence at protein level"/>
<gene>
    <name evidence="7" type="primary">IQD29</name>
    <name evidence="9" type="ordered locus">At2g02790</name>
    <name evidence="10" type="ORF">T20F6.7</name>
</gene>
<feature type="chain" id="PRO_0000453134" description="Protein IQ-DOMAIN 29">
    <location>
        <begin position="1"/>
        <end position="597"/>
    </location>
</feature>
<feature type="domain" description="IQ 1" evidence="2">
    <location>
        <begin position="106"/>
        <end position="134"/>
    </location>
</feature>
<feature type="domain" description="IQ 2" evidence="2">
    <location>
        <begin position="135"/>
        <end position="153"/>
    </location>
</feature>
<feature type="domain" description="IQ 3" evidence="2">
    <location>
        <begin position="157"/>
        <end position="183"/>
    </location>
</feature>
<feature type="region of interest" description="Disordered" evidence="4">
    <location>
        <begin position="1"/>
        <end position="31"/>
    </location>
</feature>
<feature type="region of interest" description="Calmodulin-binding" evidence="7">
    <location>
        <begin position="159"/>
        <end position="173"/>
    </location>
</feature>
<feature type="region of interest" description="Disordered" evidence="4">
    <location>
        <begin position="268"/>
        <end position="379"/>
    </location>
</feature>
<feature type="region of interest" description="Disordered" evidence="4">
    <location>
        <begin position="407"/>
        <end position="597"/>
    </location>
</feature>
<feature type="short sequence motif" description="Nuclear localization signal 1" evidence="3">
    <location>
        <begin position="264"/>
        <end position="271"/>
    </location>
</feature>
<feature type="short sequence motif" description="Nuclear localization signal 2" evidence="3">
    <location>
        <begin position="356"/>
        <end position="363"/>
    </location>
</feature>
<feature type="compositionally biased region" description="Low complexity" evidence="4">
    <location>
        <begin position="289"/>
        <end position="300"/>
    </location>
</feature>
<feature type="compositionally biased region" description="Basic and acidic residues" evidence="4">
    <location>
        <begin position="319"/>
        <end position="329"/>
    </location>
</feature>
<feature type="compositionally biased region" description="Basic and acidic residues" evidence="4">
    <location>
        <begin position="414"/>
        <end position="463"/>
    </location>
</feature>
<feature type="compositionally biased region" description="Polar residues" evidence="4">
    <location>
        <begin position="467"/>
        <end position="480"/>
    </location>
</feature>
<feature type="compositionally biased region" description="Basic and acidic residues" evidence="4">
    <location>
        <begin position="481"/>
        <end position="500"/>
    </location>
</feature>
<feature type="compositionally biased region" description="Polar residues" evidence="4">
    <location>
        <begin position="572"/>
        <end position="584"/>
    </location>
</feature>
<feature type="compositionally biased region" description="Basic and acidic residues" evidence="4">
    <location>
        <begin position="585"/>
        <end position="597"/>
    </location>
</feature>
<dbReference type="EMBL" id="AC002521">
    <property type="protein sequence ID" value="AAC05343.1"/>
    <property type="status" value="ALT_SEQ"/>
    <property type="molecule type" value="Genomic_DNA"/>
</dbReference>
<dbReference type="EMBL" id="CP002685">
    <property type="protein sequence ID" value="ANM62330.1"/>
    <property type="molecule type" value="Genomic_DNA"/>
</dbReference>
<dbReference type="EMBL" id="CP002685">
    <property type="protein sequence ID" value="ANM62331.1"/>
    <property type="molecule type" value="Genomic_DNA"/>
</dbReference>
<dbReference type="EMBL" id="AK221426">
    <property type="protein sequence ID" value="BAD94424.1"/>
    <property type="molecule type" value="mRNA"/>
</dbReference>
<dbReference type="PIR" id="T00849">
    <property type="entry name" value="T00849"/>
</dbReference>
<dbReference type="RefSeq" id="NP_001324494.1">
    <property type="nucleotide sequence ID" value="NM_001335145.1"/>
</dbReference>
<dbReference type="RefSeq" id="NP_001324495.1">
    <property type="nucleotide sequence ID" value="NM_001335144.1"/>
</dbReference>
<dbReference type="SMR" id="A0A1P8B0B7"/>
<dbReference type="FunCoup" id="A0A1P8B0B7">
    <property type="interactions" value="811"/>
</dbReference>
<dbReference type="iPTMnet" id="A0A1P8B0B7"/>
<dbReference type="ProteomicsDB" id="177554"/>
<dbReference type="EnsemblPlants" id="AT2G02790.2">
    <property type="protein sequence ID" value="AT2G02790.2"/>
    <property type="gene ID" value="AT2G02790"/>
</dbReference>
<dbReference type="EnsemblPlants" id="AT2G02790.3">
    <property type="protein sequence ID" value="AT2G02790.3"/>
    <property type="gene ID" value="AT2G02790"/>
</dbReference>
<dbReference type="GeneID" id="814808"/>
<dbReference type="Gramene" id="AT2G02790.2">
    <property type="protein sequence ID" value="AT2G02790.2"/>
    <property type="gene ID" value="AT2G02790"/>
</dbReference>
<dbReference type="Gramene" id="AT2G02790.3">
    <property type="protein sequence ID" value="AT2G02790.3"/>
    <property type="gene ID" value="AT2G02790"/>
</dbReference>
<dbReference type="KEGG" id="ath:AT2G02790"/>
<dbReference type="Araport" id="AT2G02790"/>
<dbReference type="TAIR" id="AT2G02790">
    <property type="gene designation" value="IQD29"/>
</dbReference>
<dbReference type="InParanoid" id="A0A1P8B0B7"/>
<dbReference type="OMA" id="TISQIWQ"/>
<dbReference type="PRO" id="PR:A0A1P8B0B7"/>
<dbReference type="Proteomes" id="UP000006548">
    <property type="component" value="Chromosome 2"/>
</dbReference>
<dbReference type="ExpressionAtlas" id="A0A1P8B0B7">
    <property type="expression patterns" value="baseline and differential"/>
</dbReference>
<dbReference type="GO" id="GO:0005737">
    <property type="term" value="C:cytoplasm"/>
    <property type="evidence" value="ECO:0007669"/>
    <property type="project" value="UniProtKB-KW"/>
</dbReference>
<dbReference type="GO" id="GO:0005856">
    <property type="term" value="C:cytoskeleton"/>
    <property type="evidence" value="ECO:0007669"/>
    <property type="project" value="UniProtKB-SubCell"/>
</dbReference>
<dbReference type="GO" id="GO:0005635">
    <property type="term" value="C:nuclear envelope"/>
    <property type="evidence" value="ECO:0007669"/>
    <property type="project" value="UniProtKB-SubCell"/>
</dbReference>
<dbReference type="GO" id="GO:0005886">
    <property type="term" value="C:plasma membrane"/>
    <property type="evidence" value="ECO:0007669"/>
    <property type="project" value="UniProtKB-SubCell"/>
</dbReference>
<dbReference type="GO" id="GO:0005516">
    <property type="term" value="F:calmodulin binding"/>
    <property type="evidence" value="ECO:0007669"/>
    <property type="project" value="UniProtKB-KW"/>
</dbReference>
<dbReference type="InterPro" id="IPR025064">
    <property type="entry name" value="DUF4005"/>
</dbReference>
<dbReference type="InterPro" id="IPR000048">
    <property type="entry name" value="IQ_motif_EF-hand-BS"/>
</dbReference>
<dbReference type="PANTHER" id="PTHR32295">
    <property type="entry name" value="IQ-DOMAIN 5-RELATED"/>
    <property type="match status" value="1"/>
</dbReference>
<dbReference type="PANTHER" id="PTHR32295:SF221">
    <property type="entry name" value="PROTEIN IQ-DOMAIN 29"/>
    <property type="match status" value="1"/>
</dbReference>
<dbReference type="Pfam" id="PF13178">
    <property type="entry name" value="DUF4005"/>
    <property type="match status" value="1"/>
</dbReference>
<dbReference type="Pfam" id="PF00612">
    <property type="entry name" value="IQ"/>
    <property type="match status" value="1"/>
</dbReference>
<dbReference type="SMART" id="SM00015">
    <property type="entry name" value="IQ"/>
    <property type="match status" value="2"/>
</dbReference>
<dbReference type="PROSITE" id="PS50096">
    <property type="entry name" value="IQ"/>
    <property type="match status" value="2"/>
</dbReference>
<sequence>MGKTPSPGKWIKSLLGKKSSKSSLEKGGEKLRSAKKEELVVKVKDNNVSKLPTEPPVVSSQEVAATQTVVVPDVVIAEKQLSGDIEGDESSNVNLESGNDSEEVKLEEAATKVQAALRAQQAREESQNLKGITRVQAVIRGHLVRRQAVATYSCIWGIVKVQALVRGKKARSSETVAQLQKTNTETETSETLQGSTYSWMENPTKLSMIDKLLVSSPTTLPLKIQYSPEDPNSAKVWLGRWTQLQVWAPGPLVVKNLVPKSQTKKRSFQAVEAEKGKLKRGVRKPTGVSTTANSSTSRSTADNEKPKRTVRKASTLGKELSKIENDKSKQSSRKSTSAIKEGSSVEVKDEKPRISHKKASLSNGIGKATRKSAEKKKEIADAVQKELPIEEVSVSLVDAPEDEKMNLIPVTISKESDLDKDEKSLVLDKPEQDELRTAERDDKAEEELKTAERDDSAEEKIQEPDAQISSENGNVASENTKPSDRRASLPAKIENHHQDDGLTQSGRKIPSYMAPTASAKARIRGQGSPRIAQEKPEKNGTTRRHSLPPAANGKLSTMSPRAHRLLIASAKGSMNSDRSFSSSKDIGDKSTKAEWKR</sequence>
<organism>
    <name type="scientific">Arabidopsis thaliana</name>
    <name type="common">Mouse-ear cress</name>
    <dbReference type="NCBI Taxonomy" id="3702"/>
    <lineage>
        <taxon>Eukaryota</taxon>
        <taxon>Viridiplantae</taxon>
        <taxon>Streptophyta</taxon>
        <taxon>Embryophyta</taxon>
        <taxon>Tracheophyta</taxon>
        <taxon>Spermatophyta</taxon>
        <taxon>Magnoliopsida</taxon>
        <taxon>eudicotyledons</taxon>
        <taxon>Gunneridae</taxon>
        <taxon>Pentapetalae</taxon>
        <taxon>rosids</taxon>
        <taxon>malvids</taxon>
        <taxon>Brassicales</taxon>
        <taxon>Brassicaceae</taxon>
        <taxon>Camelineae</taxon>
        <taxon>Arabidopsis</taxon>
    </lineage>
</organism>
<protein>
    <recommendedName>
        <fullName evidence="7">Protein IQ-DOMAIN 29</fullName>
        <shortName evidence="7">AtIQD29</shortName>
    </recommendedName>
</protein>
<comment type="function">
    <text evidence="1">May be involved in cooperative interactions with calmodulins or calmodulin-like proteins (By similarity). Recruits calmodulin proteins to microtubules, thus being a potential scaffold in cellular signaling and trafficking (By similarity). May associate with nucleic acids and regulate gene expression at the transcriptional or post-transcriptional level (By similarity).</text>
</comment>
<comment type="subunit">
    <text evidence="1">Binds to multiple calmodulin (CaM) in the presence of Ca(2+) and CaM-like proteins.</text>
</comment>
<comment type="subcellular location">
    <subcellularLocation>
        <location evidence="3">Nucleus</location>
    </subcellularLocation>
    <subcellularLocation>
        <location evidence="6">Nucleus envelope</location>
    </subcellularLocation>
    <subcellularLocation>
        <location evidence="5 6">Cytoplasm</location>
        <location evidence="5 6">Cytoskeleton</location>
    </subcellularLocation>
    <subcellularLocation>
        <location evidence="6">Cell membrane</location>
    </subcellularLocation>
    <text evidence="5">Associates to cortical microtubules (MTs).</text>
</comment>
<comment type="similarity">
    <text evidence="8">Belongs to the IQD family.</text>
</comment>
<comment type="sequence caution" evidence="8">
    <conflict type="erroneous gene model prediction">
        <sequence resource="EMBL-CDS" id="AAC05343"/>
    </conflict>
</comment>